<feature type="initiator methionine" description="Removed" evidence="5">
    <location>
        <position position="1"/>
    </location>
</feature>
<feature type="chain" id="PRO_0000052674" description="Hemoglobin subunit alpha">
    <location>
        <begin position="2"/>
        <end position="142"/>
    </location>
</feature>
<feature type="peptide" id="PRO_0000455895" description="Hemopressin" evidence="2">
    <location>
        <begin position="96"/>
        <end position="104"/>
    </location>
</feature>
<feature type="domain" description="Globin" evidence="4">
    <location>
        <begin position="2"/>
        <end position="142"/>
    </location>
</feature>
<feature type="binding site" evidence="4">
    <location>
        <position position="59"/>
    </location>
    <ligand>
        <name>O2</name>
        <dbReference type="ChEBI" id="CHEBI:15379"/>
    </ligand>
</feature>
<feature type="binding site" description="proximal binding residue" evidence="4">
    <location>
        <position position="88"/>
    </location>
    <ligand>
        <name>heme b</name>
        <dbReference type="ChEBI" id="CHEBI:60344"/>
    </ligand>
    <ligandPart>
        <name>Fe</name>
        <dbReference type="ChEBI" id="CHEBI:18248"/>
    </ligandPart>
</feature>
<feature type="modified residue" description="Phosphoserine" evidence="3">
    <location>
        <position position="4"/>
    </location>
</feature>
<feature type="modified residue" description="N6-succinyllysine" evidence="1">
    <location>
        <position position="8"/>
    </location>
</feature>
<feature type="modified residue" description="N6-succinyllysine" evidence="1">
    <location>
        <position position="12"/>
    </location>
</feature>
<feature type="modified residue" description="N6-acetyllysine; alternate" evidence="3">
    <location>
        <position position="17"/>
    </location>
</feature>
<feature type="modified residue" description="N6-succinyllysine; alternate" evidence="1">
    <location>
        <position position="17"/>
    </location>
</feature>
<feature type="modified residue" description="Phosphotyrosine" evidence="3">
    <location>
        <position position="25"/>
    </location>
</feature>
<feature type="modified residue" description="Phosphoserine" evidence="3">
    <location>
        <position position="36"/>
    </location>
</feature>
<feature type="modified residue" description="N6-succinyllysine" evidence="1">
    <location>
        <position position="41"/>
    </location>
</feature>
<feature type="modified residue" description="Phosphoserine" evidence="3">
    <location>
        <position position="50"/>
    </location>
</feature>
<feature type="modified residue" description="Phosphoserine" evidence="1">
    <location>
        <position position="103"/>
    </location>
</feature>
<feature type="modified residue" description="Phosphothreonine" evidence="1">
    <location>
        <position position="109"/>
    </location>
</feature>
<feature type="modified residue" description="Phosphoserine" evidence="1">
    <location>
        <position position="125"/>
    </location>
</feature>
<feature type="modified residue" description="Phosphothreonine" evidence="1">
    <location>
        <position position="135"/>
    </location>
</feature>
<feature type="modified residue" description="Phosphothreonine" evidence="1">
    <location>
        <position position="138"/>
    </location>
</feature>
<feature type="modified residue" description="Phosphoserine" evidence="1">
    <location>
        <position position="139"/>
    </location>
</feature>
<gene>
    <name type="primary">HBA</name>
</gene>
<dbReference type="EMBL" id="AY459589">
    <property type="protein sequence ID" value="AAS18013.1"/>
    <property type="molecule type" value="Genomic_DNA"/>
</dbReference>
<dbReference type="SMR" id="P81043"/>
<dbReference type="HOGENOM" id="CLU_003827_10_2_1"/>
<dbReference type="OMA" id="MFTSFPT"/>
<dbReference type="TreeFam" id="TF332328"/>
<dbReference type="GO" id="GO:0072562">
    <property type="term" value="C:blood microparticle"/>
    <property type="evidence" value="ECO:0007669"/>
    <property type="project" value="TreeGrafter"/>
</dbReference>
<dbReference type="GO" id="GO:0031838">
    <property type="term" value="C:haptoglobin-hemoglobin complex"/>
    <property type="evidence" value="ECO:0007669"/>
    <property type="project" value="TreeGrafter"/>
</dbReference>
<dbReference type="GO" id="GO:0005833">
    <property type="term" value="C:hemoglobin complex"/>
    <property type="evidence" value="ECO:0007669"/>
    <property type="project" value="InterPro"/>
</dbReference>
<dbReference type="GO" id="GO:0031720">
    <property type="term" value="F:haptoglobin binding"/>
    <property type="evidence" value="ECO:0007669"/>
    <property type="project" value="TreeGrafter"/>
</dbReference>
<dbReference type="GO" id="GO:0020037">
    <property type="term" value="F:heme binding"/>
    <property type="evidence" value="ECO:0007669"/>
    <property type="project" value="InterPro"/>
</dbReference>
<dbReference type="GO" id="GO:0005506">
    <property type="term" value="F:iron ion binding"/>
    <property type="evidence" value="ECO:0007669"/>
    <property type="project" value="InterPro"/>
</dbReference>
<dbReference type="GO" id="GO:0043177">
    <property type="term" value="F:organic acid binding"/>
    <property type="evidence" value="ECO:0007669"/>
    <property type="project" value="TreeGrafter"/>
</dbReference>
<dbReference type="GO" id="GO:0019825">
    <property type="term" value="F:oxygen binding"/>
    <property type="evidence" value="ECO:0007669"/>
    <property type="project" value="InterPro"/>
</dbReference>
<dbReference type="GO" id="GO:0005344">
    <property type="term" value="F:oxygen carrier activity"/>
    <property type="evidence" value="ECO:0007669"/>
    <property type="project" value="UniProtKB-KW"/>
</dbReference>
<dbReference type="GO" id="GO:0004601">
    <property type="term" value="F:peroxidase activity"/>
    <property type="evidence" value="ECO:0007669"/>
    <property type="project" value="TreeGrafter"/>
</dbReference>
<dbReference type="GO" id="GO:0042744">
    <property type="term" value="P:hydrogen peroxide catabolic process"/>
    <property type="evidence" value="ECO:0007669"/>
    <property type="project" value="TreeGrafter"/>
</dbReference>
<dbReference type="CDD" id="cd08927">
    <property type="entry name" value="Hb-alpha-like"/>
    <property type="match status" value="1"/>
</dbReference>
<dbReference type="FunFam" id="1.10.490.10:FF:000002">
    <property type="entry name" value="Hemoglobin subunit alpha"/>
    <property type="match status" value="1"/>
</dbReference>
<dbReference type="Gene3D" id="1.10.490.10">
    <property type="entry name" value="Globins"/>
    <property type="match status" value="1"/>
</dbReference>
<dbReference type="InterPro" id="IPR000971">
    <property type="entry name" value="Globin"/>
</dbReference>
<dbReference type="InterPro" id="IPR009050">
    <property type="entry name" value="Globin-like_sf"/>
</dbReference>
<dbReference type="InterPro" id="IPR012292">
    <property type="entry name" value="Globin/Proto"/>
</dbReference>
<dbReference type="InterPro" id="IPR002338">
    <property type="entry name" value="Hemoglobin_a-typ"/>
</dbReference>
<dbReference type="InterPro" id="IPR050056">
    <property type="entry name" value="Hemoglobin_oxygen_transport"/>
</dbReference>
<dbReference type="InterPro" id="IPR002339">
    <property type="entry name" value="Hemoglobin_pi"/>
</dbReference>
<dbReference type="PANTHER" id="PTHR11442">
    <property type="entry name" value="HEMOGLOBIN FAMILY MEMBER"/>
    <property type="match status" value="1"/>
</dbReference>
<dbReference type="PANTHER" id="PTHR11442:SF48">
    <property type="entry name" value="HEMOGLOBIN SUBUNIT ALPHA"/>
    <property type="match status" value="1"/>
</dbReference>
<dbReference type="Pfam" id="PF00042">
    <property type="entry name" value="Globin"/>
    <property type="match status" value="1"/>
</dbReference>
<dbReference type="PRINTS" id="PR00612">
    <property type="entry name" value="ALPHAHAEM"/>
</dbReference>
<dbReference type="PRINTS" id="PR00815">
    <property type="entry name" value="PIHAEM"/>
</dbReference>
<dbReference type="SUPFAM" id="SSF46458">
    <property type="entry name" value="Globin-like"/>
    <property type="match status" value="1"/>
</dbReference>
<dbReference type="PROSITE" id="PS01033">
    <property type="entry name" value="GLOBIN"/>
    <property type="match status" value="1"/>
</dbReference>
<keyword id="KW-0007">Acetylation</keyword>
<keyword id="KW-0903">Direct protein sequencing</keyword>
<keyword id="KW-0349">Heme</keyword>
<keyword id="KW-0408">Iron</keyword>
<keyword id="KW-0479">Metal-binding</keyword>
<keyword id="KW-0561">Oxygen transport</keyword>
<keyword id="KW-0597">Phosphoprotein</keyword>
<keyword id="KW-0813">Transport</keyword>
<name>HBA_NOTEU</name>
<reference key="1">
    <citation type="journal article" date="2004" name="J. Mol. Evol.">
        <title>Linkage of the beta-like omega-globin gene to alpha-like globin genes in an Australian marsupial supports the chromosome duplication model for separation of globin gene clusters.</title>
        <authorList>
            <person name="Wheeler D."/>
            <person name="Hope R.M."/>
            <person name="Cooper S.J.B."/>
            <person name="Gooley A.A."/>
            <person name="Holland R.A.B."/>
        </authorList>
    </citation>
    <scope>NUCLEOTIDE SEQUENCE [GENOMIC DNA]</scope>
    <source>
        <tissue>Liver</tissue>
    </source>
</reference>
<reference key="2">
    <citation type="journal article" date="1997" name="Eur. J. Biochem.">
        <title>Characterization of the embryonic globin chains of the marsupial Tammar wallaby, Macropus eugenii.</title>
        <authorList>
            <person name="Holland R.A.B."/>
            <person name="Gooley A.A."/>
        </authorList>
    </citation>
    <scope>PROTEIN SEQUENCE OF 2-32</scope>
    <source>
        <tissue>Blood</tissue>
    </source>
</reference>
<evidence type="ECO:0000250" key="1">
    <source>
        <dbReference type="UniProtKB" id="P01942"/>
    </source>
</evidence>
<evidence type="ECO:0000250" key="2">
    <source>
        <dbReference type="UniProtKB" id="P01946"/>
    </source>
</evidence>
<evidence type="ECO:0000250" key="3">
    <source>
        <dbReference type="UniProtKB" id="P69905"/>
    </source>
</evidence>
<evidence type="ECO:0000255" key="4">
    <source>
        <dbReference type="PROSITE-ProRule" id="PRU00238"/>
    </source>
</evidence>
<evidence type="ECO:0000269" key="5">
    <source>
    </source>
</evidence>
<accession>P81043</accession>
<accession>Q6H1M0</accession>
<proteinExistence type="evidence at protein level"/>
<protein>
    <recommendedName>
        <fullName>Hemoglobin subunit alpha</fullName>
    </recommendedName>
    <alternativeName>
        <fullName>Alpha-globin</fullName>
    </alternativeName>
    <alternativeName>
        <fullName>Hemoglobin alpha chain</fullName>
    </alternativeName>
    <component>
        <recommendedName>
            <fullName evidence="2">Hemopressin</fullName>
        </recommendedName>
    </component>
</protein>
<comment type="function">
    <text>Involved in oxygen transport from the lung to the various peripheral tissues.</text>
</comment>
<comment type="function">
    <molecule>Hemopressin</molecule>
    <text evidence="2">Hemopressin acts as an antagonist peptide of the cannabinoid receptor CNR1. Hemopressin-binding efficiently blocks cannabinoid receptor CNR1 and subsequent signaling.</text>
</comment>
<comment type="subunit">
    <text>Heterotetramer of two alpha chains and two beta chains.</text>
</comment>
<comment type="tissue specificity">
    <text>Red blood cells.</text>
</comment>
<comment type="similarity">
    <text evidence="4">Belongs to the globin family.</text>
</comment>
<sequence>MVLSAADKGHVKGIWGKVGGHAGEYAAEGLERTFHSFPTTKTYFPHFDLSHGSAQIQAHGKKIADALGQAVEHIDDLPGTLSKLSDLHAHKLRVDPVNFKLLSHCLLVTFAAHLGDAFTPEVHASLDKFLAAVSTVLTSKYR</sequence>
<organism>
    <name type="scientific">Notamacropus eugenii</name>
    <name type="common">Tammar wallaby</name>
    <name type="synonym">Macropus eugenii</name>
    <dbReference type="NCBI Taxonomy" id="9315"/>
    <lineage>
        <taxon>Eukaryota</taxon>
        <taxon>Metazoa</taxon>
        <taxon>Chordata</taxon>
        <taxon>Craniata</taxon>
        <taxon>Vertebrata</taxon>
        <taxon>Euteleostomi</taxon>
        <taxon>Mammalia</taxon>
        <taxon>Metatheria</taxon>
        <taxon>Diprotodontia</taxon>
        <taxon>Macropodidae</taxon>
        <taxon>Notamacropus</taxon>
    </lineage>
</organism>